<comment type="similarity">
    <text evidence="1">Belongs to the bacterial ribosomal protein bL33 family.</text>
</comment>
<feature type="chain" id="PRO_0000356481" description="Large ribosomal subunit protein bL33">
    <location>
        <begin position="1"/>
        <end position="52"/>
    </location>
</feature>
<evidence type="ECO:0000255" key="1">
    <source>
        <dbReference type="HAMAP-Rule" id="MF_00294"/>
    </source>
</evidence>
<evidence type="ECO:0000305" key="2"/>
<proteinExistence type="inferred from homology"/>
<accession>Q1CS61</accession>
<gene>
    <name evidence="1" type="primary">rpmG</name>
    <name type="ordered locus">HPAG1_1144</name>
</gene>
<name>RL33_HELPH</name>
<sequence>MKVKIGLKCSDCEDINYSTTKNAKTNTEKLELKKFCPRENKHTLHKEIKLKS</sequence>
<dbReference type="EMBL" id="CP000241">
    <property type="protein sequence ID" value="ABF85211.1"/>
    <property type="molecule type" value="Genomic_DNA"/>
</dbReference>
<dbReference type="RefSeq" id="WP_000865159.1">
    <property type="nucleotide sequence ID" value="NC_008086.1"/>
</dbReference>
<dbReference type="SMR" id="Q1CS61"/>
<dbReference type="KEGG" id="hpa:HPAG1_1144"/>
<dbReference type="HOGENOM" id="CLU_190949_0_2_7"/>
<dbReference type="GO" id="GO:0005737">
    <property type="term" value="C:cytoplasm"/>
    <property type="evidence" value="ECO:0007669"/>
    <property type="project" value="UniProtKB-ARBA"/>
</dbReference>
<dbReference type="GO" id="GO:1990904">
    <property type="term" value="C:ribonucleoprotein complex"/>
    <property type="evidence" value="ECO:0007669"/>
    <property type="project" value="UniProtKB-KW"/>
</dbReference>
<dbReference type="GO" id="GO:0005840">
    <property type="term" value="C:ribosome"/>
    <property type="evidence" value="ECO:0007669"/>
    <property type="project" value="UniProtKB-KW"/>
</dbReference>
<dbReference type="GO" id="GO:0003735">
    <property type="term" value="F:structural constituent of ribosome"/>
    <property type="evidence" value="ECO:0007669"/>
    <property type="project" value="InterPro"/>
</dbReference>
<dbReference type="GO" id="GO:0006412">
    <property type="term" value="P:translation"/>
    <property type="evidence" value="ECO:0007669"/>
    <property type="project" value="UniProtKB-UniRule"/>
</dbReference>
<dbReference type="Gene3D" id="2.20.28.120">
    <property type="entry name" value="Ribosomal protein L33"/>
    <property type="match status" value="1"/>
</dbReference>
<dbReference type="HAMAP" id="MF_00294">
    <property type="entry name" value="Ribosomal_bL33"/>
    <property type="match status" value="1"/>
</dbReference>
<dbReference type="InterPro" id="IPR001705">
    <property type="entry name" value="Ribosomal_bL33"/>
</dbReference>
<dbReference type="InterPro" id="IPR018264">
    <property type="entry name" value="Ribosomal_bL33_CS"/>
</dbReference>
<dbReference type="InterPro" id="IPR038584">
    <property type="entry name" value="Ribosomal_bL33_sf"/>
</dbReference>
<dbReference type="InterPro" id="IPR011332">
    <property type="entry name" value="Ribosomal_zn-bd"/>
</dbReference>
<dbReference type="NCBIfam" id="NF001764">
    <property type="entry name" value="PRK00504.1"/>
    <property type="match status" value="1"/>
</dbReference>
<dbReference type="NCBIfam" id="NF001860">
    <property type="entry name" value="PRK00595.1"/>
    <property type="match status" value="1"/>
</dbReference>
<dbReference type="NCBIfam" id="TIGR01023">
    <property type="entry name" value="rpmG_bact"/>
    <property type="match status" value="1"/>
</dbReference>
<dbReference type="PANTHER" id="PTHR43168">
    <property type="entry name" value="50S RIBOSOMAL PROTEIN L33, CHLOROPLASTIC"/>
    <property type="match status" value="1"/>
</dbReference>
<dbReference type="PANTHER" id="PTHR43168:SF6">
    <property type="entry name" value="LARGE RIBOSOMAL SUBUNIT PROTEIN BL33A"/>
    <property type="match status" value="1"/>
</dbReference>
<dbReference type="Pfam" id="PF00471">
    <property type="entry name" value="Ribosomal_L33"/>
    <property type="match status" value="1"/>
</dbReference>
<dbReference type="SUPFAM" id="SSF57829">
    <property type="entry name" value="Zn-binding ribosomal proteins"/>
    <property type="match status" value="1"/>
</dbReference>
<dbReference type="PROSITE" id="PS00582">
    <property type="entry name" value="RIBOSOMAL_L33"/>
    <property type="match status" value="1"/>
</dbReference>
<reference key="1">
    <citation type="journal article" date="2006" name="Proc. Natl. Acad. Sci. U.S.A.">
        <title>The complete genome sequence of a chronic atrophic gastritis Helicobacter pylori strain: evolution during disease progression.</title>
        <authorList>
            <person name="Oh J.D."/>
            <person name="Kling-Baeckhed H."/>
            <person name="Giannakis M."/>
            <person name="Xu J."/>
            <person name="Fulton R.S."/>
            <person name="Fulton L.A."/>
            <person name="Cordum H.S."/>
            <person name="Wang C."/>
            <person name="Elliott G."/>
            <person name="Edwards J."/>
            <person name="Mardis E.R."/>
            <person name="Engstrand L.G."/>
            <person name="Gordon J.I."/>
        </authorList>
    </citation>
    <scope>NUCLEOTIDE SEQUENCE [LARGE SCALE GENOMIC DNA]</scope>
    <source>
        <strain>HPAG1</strain>
    </source>
</reference>
<protein>
    <recommendedName>
        <fullName evidence="1">Large ribosomal subunit protein bL33</fullName>
    </recommendedName>
    <alternativeName>
        <fullName evidence="2">50S ribosomal protein L33</fullName>
    </alternativeName>
</protein>
<organism>
    <name type="scientific">Helicobacter pylori (strain HPAG1)</name>
    <dbReference type="NCBI Taxonomy" id="357544"/>
    <lineage>
        <taxon>Bacteria</taxon>
        <taxon>Pseudomonadati</taxon>
        <taxon>Campylobacterota</taxon>
        <taxon>Epsilonproteobacteria</taxon>
        <taxon>Campylobacterales</taxon>
        <taxon>Helicobacteraceae</taxon>
        <taxon>Helicobacter</taxon>
    </lineage>
</organism>
<keyword id="KW-0687">Ribonucleoprotein</keyword>
<keyword id="KW-0689">Ribosomal protein</keyword>